<reference key="1">
    <citation type="journal article" date="1996" name="Theor. Appl. Genet.">
        <title>The maize two dimensional gel protein database: towards an integrated genome analysis program.</title>
        <authorList>
            <person name="Touzet P."/>
            <person name="Riccardi F."/>
            <person name="Morin C."/>
            <person name="Damerval C."/>
            <person name="Huet J.-C."/>
            <person name="Pernollet J.-C."/>
            <person name="Zivy M."/>
            <person name="de Vienne D."/>
        </authorList>
        <dbReference type="AGRICOLA" id="IND20551642"/>
    </citation>
    <scope>PROTEIN SEQUENCE</scope>
    <source>
        <tissue>Coleoptile</tissue>
    </source>
</reference>
<feature type="chain" id="PRO_0000055523" description="Unknown protein from spot 688 of 2D-PAGE of etiolated coleoptile">
    <location>
        <begin position="1" status="less than"/>
        <end position="15" status="greater than"/>
    </location>
</feature>
<feature type="non-terminal residue">
    <location>
        <position position="1"/>
    </location>
</feature>
<feature type="non-terminal residue">
    <location>
        <position position="15"/>
    </location>
</feature>
<sequence>EREQLRDQVYDAMAE</sequence>
<proteinExistence type="evidence at protein level"/>
<dbReference type="MaizeGDB" id="123958"/>
<dbReference type="InParanoid" id="P80633"/>
<dbReference type="Proteomes" id="UP000007305">
    <property type="component" value="Unplaced"/>
</dbReference>
<accession>P80633</accession>
<organism>
    <name type="scientific">Zea mays</name>
    <name type="common">Maize</name>
    <dbReference type="NCBI Taxonomy" id="4577"/>
    <lineage>
        <taxon>Eukaryota</taxon>
        <taxon>Viridiplantae</taxon>
        <taxon>Streptophyta</taxon>
        <taxon>Embryophyta</taxon>
        <taxon>Tracheophyta</taxon>
        <taxon>Spermatophyta</taxon>
        <taxon>Magnoliopsida</taxon>
        <taxon>Liliopsida</taxon>
        <taxon>Poales</taxon>
        <taxon>Poaceae</taxon>
        <taxon>PACMAD clade</taxon>
        <taxon>Panicoideae</taxon>
        <taxon>Andropogonodae</taxon>
        <taxon>Andropogoneae</taxon>
        <taxon>Tripsacinae</taxon>
        <taxon>Zea</taxon>
    </lineage>
</organism>
<comment type="miscellaneous">
    <text>On the 2D-gel the determined pI of this unknown protein is: 6.4, its MW is: 48.4 kDa.</text>
</comment>
<name>UC27_MAIZE</name>
<protein>
    <recommendedName>
        <fullName>Unknown protein from spot 688 of 2D-PAGE of etiolated coleoptile</fullName>
    </recommendedName>
</protein>
<keyword id="KW-0903">Direct protein sequencing</keyword>
<keyword id="KW-1185">Reference proteome</keyword>